<sequence>MAEQLVEAPAYARTLDRAVEYLLSCQKDEGYWWGPLLSNVTMEAEYVLLCHILDRVDRDRMEKIRRYLLHEQREDGTWALYPGGPPDLDTTIEAYVALKYIGMSRDEEPMQKALRFIQSQGGIESSRVFTRMWLALVGEYPWEKVPMVPPEIMFLGKRMPLNIYEFGSWARATVVALSIVMSRQPVFPLPERARVPELYETDVPPRRRGAKGGGGWIFDALDRALHGYQKLSVHPFRRAAEIRALDWLLERQAGDGSWGGIQPPWFYALIALKILDMTQHPAFIKGWEGLELYGVELDYGGWMFQASISPVWDTGLAVLALRAAGLPADHDRLVKAGEWLLDRQITVPGDWAVKRPNLKPGGFAFQFDNVYYPDVDDTAVVVWALNTLRLPDERRRRDAMTKGFRWIVGMQSSNGGWGAYDVDNTSDLPNHIPFCDFGEVTDPPSEDVTAHVLECFGSFGYDDAWKVIRRAVEYLKREQKPDGSWFGRWGVNYLYGTGAVVSALKAVGIDTREPYIQKALDWVEQHQNPDGGWGEDCRSYEDPAYAGKGASTPSQTAWALMALIAGGRAESEAARRGVQYLVETQRPDGGWDEPYYTGTGFPGDFYLGYTMYRHVFPTLALGRYKQAIERR</sequence>
<organism>
    <name type="scientific">Alicyclobacillus acidocaldarius subsp. acidocaldarius (strain ATCC 27009 / DSM 446 / BCRC 14685 / JCM 5260 / KCTC 1825 / NBRC 15652 / NCIMB 11725 / NRRL B-14509 / 104-IA)</name>
    <name type="common">Bacillus acidocaldarius</name>
    <dbReference type="NCBI Taxonomy" id="521098"/>
    <lineage>
        <taxon>Bacteria</taxon>
        <taxon>Bacillati</taxon>
        <taxon>Bacillota</taxon>
        <taxon>Bacilli</taxon>
        <taxon>Bacillales</taxon>
        <taxon>Alicyclobacillaceae</taxon>
        <taxon>Alicyclobacillus</taxon>
    </lineage>
</organism>
<name>SQHC_ALIAD</name>
<proteinExistence type="evidence at protein level"/>
<comment type="function">
    <text evidence="3 4">Catalyzes the cyclization of squalene to two pentacyclic triterpenes, hop-22(29)-ene and hopan-22-ol (diplopterol); hopene and hopanol are formed at a constant ratio of 5:1. Is a key enzyme of hopanoid biosynthesis; hopanoids are components of the bacterial cytoplasmic membranes that play a vital role in stabilizing the membranes.</text>
</comment>
<comment type="catalytic activity">
    <reaction evidence="2 3 4">
        <text>squalene = hop-22(29)-ene</text>
        <dbReference type="Rhea" id="RHEA:17637"/>
        <dbReference type="ChEBI" id="CHEBI:4648"/>
        <dbReference type="ChEBI" id="CHEBI:15440"/>
        <dbReference type="EC" id="5.4.99.17"/>
    </reaction>
    <physiologicalReaction direction="left-to-right" evidence="11 13">
        <dbReference type="Rhea" id="RHEA:17638"/>
    </physiologicalReaction>
</comment>
<comment type="catalytic activity">
    <reaction evidence="2 4">
        <text>squalene + H2O = hopan-22-ol</text>
        <dbReference type="Rhea" id="RHEA:16561"/>
        <dbReference type="ChEBI" id="CHEBI:15377"/>
        <dbReference type="ChEBI" id="CHEBI:15440"/>
        <dbReference type="ChEBI" id="CHEBI:36484"/>
        <dbReference type="EC" id="4.2.1.129"/>
    </reaction>
    <physiologicalReaction direction="left-to-right" evidence="13">
        <dbReference type="Rhea" id="RHEA:16562"/>
    </physiologicalReaction>
</comment>
<comment type="biophysicochemical properties">
    <kinetics>
        <KM evidence="3 4">3 uM for squalene</KM>
        <KM evidence="2">38 uM for squalene</KM>
        <text evidence="2">kcat is 72 min(-1).</text>
    </kinetics>
    <phDependence>
        <text evidence="3 4">Optimum pH is 6.</text>
    </phDependence>
    <temperatureDependence>
        <text evidence="3 4">Optimum temperature is 60 degrees Celsius.</text>
    </temperatureDependence>
</comment>
<comment type="pathway">
    <text evidence="13">Secondary metabolite biosynthesis; hopanoid biosynthesis.</text>
</comment>
<comment type="subunit">
    <text evidence="3">Homodimer.</text>
</comment>
<comment type="subcellular location">
    <subcellularLocation>
        <location>Cell membrane</location>
        <topology evidence="3 4">Peripheral membrane protein</topology>
    </subcellularLocation>
    <text evidence="3 4">Seems to be anchored in the membrane by strong hydrophobic interactions but is not an integral membrane protein.</text>
</comment>
<comment type="similarity">
    <text evidence="9">Belongs to the terpene cyclase/mutase family.</text>
</comment>
<keyword id="KW-0002">3D-structure</keyword>
<keyword id="KW-1003">Cell membrane</keyword>
<keyword id="KW-0903">Direct protein sequencing</keyword>
<keyword id="KW-0413">Isomerase</keyword>
<keyword id="KW-0456">Lyase</keyword>
<keyword id="KW-0472">Membrane</keyword>
<keyword id="KW-1185">Reference proteome</keyword>
<keyword id="KW-0677">Repeat</keyword>
<accession>P33247</accession>
<accession>C8WSG4</accession>
<dbReference type="EC" id="5.4.99.17" evidence="3 4"/>
<dbReference type="EC" id="4.2.1.129" evidence="4"/>
<dbReference type="EMBL" id="M73834">
    <property type="protein sequence ID" value="AAA75452.1"/>
    <property type="molecule type" value="Genomic_DNA"/>
</dbReference>
<dbReference type="EMBL" id="AB007002">
    <property type="protein sequence ID" value="BAA25185.1"/>
    <property type="molecule type" value="Genomic_DNA"/>
</dbReference>
<dbReference type="EMBL" id="CP001727">
    <property type="protein sequence ID" value="ACV59449.1"/>
    <property type="molecule type" value="Genomic_DNA"/>
</dbReference>
<dbReference type="PIR" id="A43300">
    <property type="entry name" value="A43300"/>
</dbReference>
<dbReference type="RefSeq" id="WP_012811690.1">
    <property type="nucleotide sequence ID" value="NC_013205.1"/>
</dbReference>
<dbReference type="PDB" id="1GSZ">
    <property type="method" value="X-ray"/>
    <property type="resolution" value="2.80 A"/>
    <property type="chains" value="A/B/C=2-631"/>
</dbReference>
<dbReference type="PDB" id="1H35">
    <property type="method" value="X-ray"/>
    <property type="resolution" value="2.80 A"/>
    <property type="chains" value="A/B/C=2-631"/>
</dbReference>
<dbReference type="PDB" id="1H36">
    <property type="method" value="X-ray"/>
    <property type="resolution" value="2.80 A"/>
    <property type="chains" value="A/B/C=2-631"/>
</dbReference>
<dbReference type="PDB" id="1H37">
    <property type="method" value="X-ray"/>
    <property type="resolution" value="2.80 A"/>
    <property type="chains" value="A/B/C=2-631"/>
</dbReference>
<dbReference type="PDB" id="1H39">
    <property type="method" value="X-ray"/>
    <property type="resolution" value="2.80 A"/>
    <property type="chains" value="A/B/C=2-631"/>
</dbReference>
<dbReference type="PDB" id="1H3A">
    <property type="method" value="X-ray"/>
    <property type="resolution" value="2.85 A"/>
    <property type="chains" value="A/B/C=2-631"/>
</dbReference>
<dbReference type="PDB" id="1H3B">
    <property type="method" value="X-ray"/>
    <property type="resolution" value="2.80 A"/>
    <property type="chains" value="A/B/C=2-631"/>
</dbReference>
<dbReference type="PDB" id="1H3C">
    <property type="method" value="X-ray"/>
    <property type="resolution" value="2.90 A"/>
    <property type="chains" value="A/B/C=2-631"/>
</dbReference>
<dbReference type="PDB" id="1O6H">
    <property type="method" value="X-ray"/>
    <property type="resolution" value="2.80 A"/>
    <property type="chains" value="A/B/C=2-631"/>
</dbReference>
<dbReference type="PDB" id="1O6Q">
    <property type="method" value="X-ray"/>
    <property type="resolution" value="2.80 A"/>
    <property type="chains" value="A/B/C=2-631"/>
</dbReference>
<dbReference type="PDB" id="1O6R">
    <property type="method" value="X-ray"/>
    <property type="resolution" value="2.70 A"/>
    <property type="chains" value="A/B/C=2-631"/>
</dbReference>
<dbReference type="PDB" id="1O79">
    <property type="method" value="X-ray"/>
    <property type="resolution" value="2.80 A"/>
    <property type="chains" value="A/B/C=2-631"/>
</dbReference>
<dbReference type="PDB" id="1SQC">
    <property type="method" value="X-ray"/>
    <property type="resolution" value="2.85 A"/>
    <property type="chains" value="A=1-631"/>
</dbReference>
<dbReference type="PDB" id="1UMP">
    <property type="method" value="X-ray"/>
    <property type="resolution" value="2.13 A"/>
    <property type="chains" value="A/B/C=2-631"/>
</dbReference>
<dbReference type="PDB" id="2SQC">
    <property type="method" value="X-ray"/>
    <property type="resolution" value="2.00 A"/>
    <property type="chains" value="A/B=1-631"/>
</dbReference>
<dbReference type="PDB" id="3SQC">
    <property type="method" value="X-ray"/>
    <property type="resolution" value="2.80 A"/>
    <property type="chains" value="A/B/C=1-631"/>
</dbReference>
<dbReference type="PDBsum" id="1GSZ"/>
<dbReference type="PDBsum" id="1H35"/>
<dbReference type="PDBsum" id="1H36"/>
<dbReference type="PDBsum" id="1H37"/>
<dbReference type="PDBsum" id="1H39"/>
<dbReference type="PDBsum" id="1H3A"/>
<dbReference type="PDBsum" id="1H3B"/>
<dbReference type="PDBsum" id="1H3C"/>
<dbReference type="PDBsum" id="1O6H"/>
<dbReference type="PDBsum" id="1O6Q"/>
<dbReference type="PDBsum" id="1O6R"/>
<dbReference type="PDBsum" id="1O79"/>
<dbReference type="PDBsum" id="1SQC"/>
<dbReference type="PDBsum" id="1UMP"/>
<dbReference type="PDBsum" id="2SQC"/>
<dbReference type="PDBsum" id="3SQC"/>
<dbReference type="SMR" id="P33247"/>
<dbReference type="STRING" id="521098.Aaci_2443"/>
<dbReference type="BindingDB" id="P33247"/>
<dbReference type="ChEMBL" id="CHEMBL3569"/>
<dbReference type="DrugBank" id="DB02139">
    <property type="generic name" value="(2e)-N-Allyl-4-{[3-(4-Bromophenyl)-5-Fluoro-1-Methyl-1h-Indazol-6-Yl]Oxy}-N-Methyl-2-Buten-1-Amine"/>
</dbReference>
<dbReference type="DrugBank" id="DB03234">
    <property type="generic name" value="(4'-{[Allyl(Methyl)Amino]Methyl}-1,1'-Biphenyl-4-Yl)(4-Bromophenyl)Methanone"/>
</dbReference>
<dbReference type="DrugBank" id="DB08458">
    <property type="generic name" value="(4-BROMOPHENYL)[4-({(2E)-4-[CYCLOPROPYL(METHYL)AMINO]BUT-2-ENYL}OXY)PHENYL]METHANONE"/>
</dbReference>
<dbReference type="DrugBank" id="DB03874">
    <property type="generic name" value="(4e,8e,12z,16z)-N,N,4,8,13,17,21-Heptamethyldocosa-4,8,12,16,20-Pentaen-1-Amine"/>
</dbReference>
<dbReference type="DrugBank" id="DB04233">
    <property type="generic name" value="(Hydroxyethyloxy)Tri(Ethyloxy)Octane"/>
</dbReference>
<dbReference type="DrugBank" id="DB03771">
    <property type="generic name" value="Allyl-{4-[3-(4-Bromo-Phenyl)-Benzofuran-6-Yloxy]-but-2-Enyl}-Methyl-Amine"/>
</dbReference>
<dbReference type="DrugBank" id="DB02339">
    <property type="generic name" value="Allyl-{6-[3-(4-Bromo-Phenyl)-Benzofuran-6-Yloxy]-Hexyl-}-Methyl-Amin"/>
</dbReference>
<dbReference type="DrugBank" id="DB04147">
    <property type="generic name" value="Dodecyldimethylamine N-oxide"/>
</dbReference>
<dbReference type="DrugBank" id="DB03748">
    <property type="generic name" value="Methyl-[4-(4-Piperidine-1-Ylmethyl-Phenyl)-Cyclohexyl]-Carbaminic Acid-(4-Chlorophenyl)-Ester"/>
</dbReference>
<dbReference type="DrugBank" id="DB02544">
    <property type="generic name" value="N-(6-{[3-(4-Bromophenyl)-1,2-Benzisothiazol-6-Yl]Oxy}Hexyl)-N-Methylprop-2-En-1-Amine"/>
</dbReference>
<dbReference type="DrugBank" id="DB03888">
    <property type="generic name" value="N-Allyl-6-{[3-(4-bromophenyl)-1-methyl-1H-indazol-6-yl]oxy}-N-methyl-1-hexanamine"/>
</dbReference>
<dbReference type="KEGG" id="aac:Aaci_2443"/>
<dbReference type="eggNOG" id="COG1657">
    <property type="taxonomic scope" value="Bacteria"/>
</dbReference>
<dbReference type="HOGENOM" id="CLU_019345_0_0_9"/>
<dbReference type="BioCyc" id="MetaCyc:MONOMER-17503"/>
<dbReference type="BRENDA" id="4.2.1.129">
    <property type="organism ID" value="243"/>
</dbReference>
<dbReference type="BRENDA" id="5.4.99.17">
    <property type="organism ID" value="243"/>
</dbReference>
<dbReference type="SABIO-RK" id="P33247"/>
<dbReference type="UniPathway" id="UPA00337"/>
<dbReference type="EvolutionaryTrace" id="P33247"/>
<dbReference type="PRO" id="PR:P33247"/>
<dbReference type="Proteomes" id="UP000001917">
    <property type="component" value="Chromosome"/>
</dbReference>
<dbReference type="GO" id="GO:0005811">
    <property type="term" value="C:lipid droplet"/>
    <property type="evidence" value="ECO:0007669"/>
    <property type="project" value="InterPro"/>
</dbReference>
<dbReference type="GO" id="GO:0005886">
    <property type="term" value="C:plasma membrane"/>
    <property type="evidence" value="ECO:0007669"/>
    <property type="project" value="UniProtKB-SubCell"/>
</dbReference>
<dbReference type="GO" id="GO:0016829">
    <property type="term" value="F:lyase activity"/>
    <property type="evidence" value="ECO:0007669"/>
    <property type="project" value="UniProtKB-KW"/>
</dbReference>
<dbReference type="GO" id="GO:0051007">
    <property type="term" value="F:squalene-hopene cyclase activity"/>
    <property type="evidence" value="ECO:0007669"/>
    <property type="project" value="UniProtKB-EC"/>
</dbReference>
<dbReference type="GO" id="GO:0016104">
    <property type="term" value="P:triterpenoid biosynthetic process"/>
    <property type="evidence" value="ECO:0007669"/>
    <property type="project" value="InterPro"/>
</dbReference>
<dbReference type="CDD" id="cd02892">
    <property type="entry name" value="SQCY_1"/>
    <property type="match status" value="1"/>
</dbReference>
<dbReference type="Gene3D" id="1.50.10.20">
    <property type="match status" value="2"/>
</dbReference>
<dbReference type="InterPro" id="IPR006400">
    <property type="entry name" value="Hopene-cyclase"/>
</dbReference>
<dbReference type="InterPro" id="IPR032696">
    <property type="entry name" value="SQ_cyclase_C"/>
</dbReference>
<dbReference type="InterPro" id="IPR032697">
    <property type="entry name" value="SQ_cyclase_N"/>
</dbReference>
<dbReference type="InterPro" id="IPR018333">
    <property type="entry name" value="Squalene_cyclase"/>
</dbReference>
<dbReference type="InterPro" id="IPR002365">
    <property type="entry name" value="Terpene_synthase_CS"/>
</dbReference>
<dbReference type="InterPro" id="IPR008930">
    <property type="entry name" value="Terpenoid_cyclase/PrenylTrfase"/>
</dbReference>
<dbReference type="NCBIfam" id="TIGR01507">
    <property type="entry name" value="hopene_cyclase"/>
    <property type="match status" value="1"/>
</dbReference>
<dbReference type="NCBIfam" id="TIGR01787">
    <property type="entry name" value="squalene_cyclas"/>
    <property type="match status" value="1"/>
</dbReference>
<dbReference type="PANTHER" id="PTHR11764:SF20">
    <property type="entry name" value="LANOSTEROL SYNTHASE"/>
    <property type="match status" value="1"/>
</dbReference>
<dbReference type="PANTHER" id="PTHR11764">
    <property type="entry name" value="TERPENE CYCLASE/MUTASE FAMILY MEMBER"/>
    <property type="match status" value="1"/>
</dbReference>
<dbReference type="Pfam" id="PF13243">
    <property type="entry name" value="SQHop_cyclase_C"/>
    <property type="match status" value="1"/>
</dbReference>
<dbReference type="Pfam" id="PF13249">
    <property type="entry name" value="SQHop_cyclase_N"/>
    <property type="match status" value="1"/>
</dbReference>
<dbReference type="SFLD" id="SFLDG01016">
    <property type="entry name" value="Prenyltransferase_Like_2"/>
    <property type="match status" value="1"/>
</dbReference>
<dbReference type="SUPFAM" id="SSF48239">
    <property type="entry name" value="Terpenoid cyclases/Protein prenyltransferases"/>
    <property type="match status" value="2"/>
</dbReference>
<dbReference type="PROSITE" id="PS01074">
    <property type="entry name" value="TERPENE_SYNTHASES"/>
    <property type="match status" value="1"/>
</dbReference>
<evidence type="ECO:0000255" key="1"/>
<evidence type="ECO:0000269" key="2">
    <source>
    </source>
</evidence>
<evidence type="ECO:0000269" key="3">
    <source>
    </source>
</evidence>
<evidence type="ECO:0000269" key="4">
    <source ref="6"/>
</evidence>
<evidence type="ECO:0000303" key="5">
    <source>
    </source>
</evidence>
<evidence type="ECO:0000303" key="6">
    <source>
    </source>
</evidence>
<evidence type="ECO:0000303" key="7">
    <source>
    </source>
</evidence>
<evidence type="ECO:0000303" key="8">
    <source ref="6"/>
</evidence>
<evidence type="ECO:0000305" key="9"/>
<evidence type="ECO:0000305" key="10">
    <source>
    </source>
</evidence>
<evidence type="ECO:0000305" key="11">
    <source>
    </source>
</evidence>
<evidence type="ECO:0000305" key="12">
    <source>
    </source>
</evidence>
<evidence type="ECO:0000305" key="13">
    <source ref="6"/>
</evidence>
<evidence type="ECO:0007744" key="14">
    <source>
        <dbReference type="PDB" id="1GSZ"/>
    </source>
</evidence>
<evidence type="ECO:0007744" key="15">
    <source>
        <dbReference type="PDB" id="1H35"/>
    </source>
</evidence>
<evidence type="ECO:0007744" key="16">
    <source>
        <dbReference type="PDB" id="1H36"/>
    </source>
</evidence>
<evidence type="ECO:0007744" key="17">
    <source>
        <dbReference type="PDB" id="1H37"/>
    </source>
</evidence>
<evidence type="ECO:0007744" key="18">
    <source>
        <dbReference type="PDB" id="1H39"/>
    </source>
</evidence>
<evidence type="ECO:0007744" key="19">
    <source>
        <dbReference type="PDB" id="1H3A"/>
    </source>
</evidence>
<evidence type="ECO:0007744" key="20">
    <source>
        <dbReference type="PDB" id="1H3B"/>
    </source>
</evidence>
<evidence type="ECO:0007744" key="21">
    <source>
        <dbReference type="PDB" id="1H3C"/>
    </source>
</evidence>
<evidence type="ECO:0007744" key="22">
    <source>
        <dbReference type="PDB" id="1O6H"/>
    </source>
</evidence>
<evidence type="ECO:0007744" key="23">
    <source>
        <dbReference type="PDB" id="1O6Q"/>
    </source>
</evidence>
<evidence type="ECO:0007744" key="24">
    <source>
        <dbReference type="PDB" id="1O6R"/>
    </source>
</evidence>
<evidence type="ECO:0007744" key="25">
    <source>
        <dbReference type="PDB" id="1O79"/>
    </source>
</evidence>
<evidence type="ECO:0007744" key="26">
    <source>
        <dbReference type="PDB" id="1SQC"/>
    </source>
</evidence>
<evidence type="ECO:0007744" key="27">
    <source>
        <dbReference type="PDB" id="1UMP"/>
    </source>
</evidence>
<evidence type="ECO:0007744" key="28">
    <source>
        <dbReference type="PDB" id="2SQC"/>
    </source>
</evidence>
<evidence type="ECO:0007744" key="29">
    <source>
        <dbReference type="PDB" id="3SQC"/>
    </source>
</evidence>
<evidence type="ECO:0007829" key="30">
    <source>
        <dbReference type="PDB" id="1GSZ"/>
    </source>
</evidence>
<evidence type="ECO:0007829" key="31">
    <source>
        <dbReference type="PDB" id="1H37"/>
    </source>
</evidence>
<evidence type="ECO:0007829" key="32">
    <source>
        <dbReference type="PDB" id="1O6H"/>
    </source>
</evidence>
<evidence type="ECO:0007829" key="33">
    <source>
        <dbReference type="PDB" id="1O6R"/>
    </source>
</evidence>
<evidence type="ECO:0007829" key="34">
    <source>
        <dbReference type="PDB" id="1SQC"/>
    </source>
</evidence>
<evidence type="ECO:0007829" key="35">
    <source>
        <dbReference type="PDB" id="1UMP"/>
    </source>
</evidence>
<evidence type="ECO:0007829" key="36">
    <source>
        <dbReference type="PDB" id="2SQC"/>
    </source>
</evidence>
<feature type="initiator methionine" description="Removed" evidence="3">
    <location>
        <position position="1"/>
    </location>
</feature>
<feature type="chain" id="PRO_0000072650" description="Squalene--hopene cyclase">
    <location>
        <begin position="2"/>
        <end position="631"/>
    </location>
</feature>
<feature type="repeat" description="PFTB 1" evidence="1">
    <location>
        <begin position="15"/>
        <end position="56"/>
    </location>
</feature>
<feature type="repeat" description="PFTB 2" evidence="1">
    <location>
        <begin position="61"/>
        <end position="102"/>
    </location>
</feature>
<feature type="repeat" description="PFTB 3" evidence="1">
    <location>
        <begin position="241"/>
        <end position="282"/>
    </location>
</feature>
<feature type="repeat" description="PFTB 4" evidence="1">
    <location>
        <begin position="400"/>
        <end position="441"/>
    </location>
</feature>
<feature type="repeat" description="PFTB 5" evidence="1">
    <location>
        <begin position="468"/>
        <end position="508"/>
    </location>
</feature>
<feature type="repeat" description="PFTB 6" evidence="1">
    <location>
        <begin position="516"/>
        <end position="557"/>
    </location>
</feature>
<feature type="repeat" description="PFTB 7" evidence="1">
    <location>
        <begin position="574"/>
        <end position="622"/>
    </location>
</feature>
<feature type="active site" description="Proton donor" evidence="10 12">
    <location>
        <position position="376"/>
    </location>
</feature>
<feature type="sequence conflict" description="In Ref. 1; AAA75452." evidence="9" ref="1">
    <original>GF</original>
    <variation>AS</variation>
    <location>
        <begin position="600"/>
        <end position="601"/>
    </location>
</feature>
<feature type="helix" evidence="36">
    <location>
        <begin position="10"/>
        <end position="25"/>
    </location>
</feature>
<feature type="strand" evidence="30">
    <location>
        <begin position="28"/>
        <end position="30"/>
    </location>
</feature>
<feature type="helix" evidence="36">
    <location>
        <begin position="41"/>
        <end position="52"/>
    </location>
</feature>
<feature type="helix" evidence="36">
    <location>
        <begin position="58"/>
        <end position="71"/>
    </location>
</feature>
<feature type="strand" evidence="33">
    <location>
        <begin position="79"/>
        <end position="81"/>
    </location>
</feature>
<feature type="helix" evidence="36">
    <location>
        <begin position="88"/>
        <end position="101"/>
    </location>
</feature>
<feature type="strand" evidence="30">
    <location>
        <begin position="105"/>
        <end position="107"/>
    </location>
</feature>
<feature type="helix" evidence="36">
    <location>
        <begin position="108"/>
        <end position="119"/>
    </location>
</feature>
<feature type="helix" evidence="36">
    <location>
        <begin position="123"/>
        <end position="125"/>
    </location>
</feature>
<feature type="helix" evidence="36">
    <location>
        <begin position="128"/>
        <end position="136"/>
    </location>
</feature>
<feature type="helix" evidence="36">
    <location>
        <begin position="142"/>
        <end position="144"/>
    </location>
</feature>
<feature type="helix" evidence="36">
    <location>
        <begin position="150"/>
        <end position="154"/>
    </location>
</feature>
<feature type="strand" evidence="31">
    <location>
        <begin position="157"/>
        <end position="159"/>
    </location>
</feature>
<feature type="helix" evidence="36">
    <location>
        <begin position="163"/>
        <end position="165"/>
    </location>
</feature>
<feature type="helix" evidence="36">
    <location>
        <begin position="168"/>
        <end position="183"/>
    </location>
</feature>
<feature type="helix" evidence="36">
    <location>
        <begin position="191"/>
        <end position="193"/>
    </location>
</feature>
<feature type="helix" evidence="36">
    <location>
        <begin position="196"/>
        <end position="199"/>
    </location>
</feature>
<feature type="strand" evidence="35">
    <location>
        <begin position="210"/>
        <end position="212"/>
    </location>
</feature>
<feature type="helix" evidence="36">
    <location>
        <begin position="216"/>
        <end position="230"/>
    </location>
</feature>
<feature type="helix" evidence="36">
    <location>
        <begin position="237"/>
        <end position="251"/>
    </location>
</feature>
<feature type="strand" evidence="36">
    <location>
        <begin position="256"/>
        <end position="258"/>
    </location>
</feature>
<feature type="helix" evidence="36">
    <location>
        <begin position="262"/>
        <end position="274"/>
    </location>
</feature>
<feature type="helix" evidence="36">
    <location>
        <begin position="281"/>
        <end position="288"/>
    </location>
</feature>
<feature type="helix" evidence="36">
    <location>
        <begin position="289"/>
        <end position="293"/>
    </location>
</feature>
<feature type="strand" evidence="36">
    <location>
        <begin position="294"/>
        <end position="296"/>
    </location>
</feature>
<feature type="turn" evidence="32">
    <location>
        <begin position="298"/>
        <end position="300"/>
    </location>
</feature>
<feature type="strand" evidence="36">
    <location>
        <begin position="302"/>
        <end position="304"/>
    </location>
</feature>
<feature type="helix" evidence="36">
    <location>
        <begin position="310"/>
        <end position="323"/>
    </location>
</feature>
<feature type="helix" evidence="36">
    <location>
        <begin position="331"/>
        <end position="342"/>
    </location>
</feature>
<feature type="helix" evidence="36">
    <location>
        <begin position="350"/>
        <end position="353"/>
    </location>
</feature>
<feature type="strand" evidence="36">
    <location>
        <begin position="365"/>
        <end position="368"/>
    </location>
</feature>
<feature type="helix" evidence="36">
    <location>
        <begin position="375"/>
        <end position="385"/>
    </location>
</feature>
<feature type="helix" evidence="36">
    <location>
        <begin position="393"/>
        <end position="409"/>
    </location>
</feature>
<feature type="strand" evidence="35">
    <location>
        <begin position="415"/>
        <end position="417"/>
    </location>
</feature>
<feature type="strand" evidence="33">
    <location>
        <begin position="419"/>
        <end position="423"/>
    </location>
</feature>
<feature type="helix" evidence="36">
    <location>
        <begin position="428"/>
        <end position="431"/>
    </location>
</feature>
<feature type="strand" evidence="33">
    <location>
        <begin position="432"/>
        <end position="434"/>
    </location>
</feature>
<feature type="strand" evidence="36">
    <location>
        <begin position="436"/>
        <end position="438"/>
    </location>
</feature>
<feature type="helix" evidence="36">
    <location>
        <begin position="446"/>
        <end position="457"/>
    </location>
</feature>
<feature type="turn" evidence="36">
    <location>
        <begin position="458"/>
        <end position="460"/>
    </location>
</feature>
<feature type="strand" evidence="30">
    <location>
        <begin position="463"/>
        <end position="465"/>
    </location>
</feature>
<feature type="helix" evidence="36">
    <location>
        <begin position="466"/>
        <end position="478"/>
    </location>
</feature>
<feature type="strand" evidence="36">
    <location>
        <begin position="488"/>
        <end position="492"/>
    </location>
</feature>
<feature type="helix" evidence="36">
    <location>
        <begin position="493"/>
        <end position="506"/>
    </location>
</feature>
<feature type="helix" evidence="36">
    <location>
        <begin position="514"/>
        <end position="525"/>
    </location>
</feature>
<feature type="helix" evidence="36">
    <location>
        <begin position="537"/>
        <end position="540"/>
    </location>
</feature>
<feature type="helix" evidence="36">
    <location>
        <begin position="543"/>
        <end position="545"/>
    </location>
</feature>
<feature type="strand" evidence="34">
    <location>
        <begin position="549"/>
        <end position="551"/>
    </location>
</feature>
<feature type="helix" evidence="36">
    <location>
        <begin position="553"/>
        <end position="565"/>
    </location>
</feature>
<feature type="strand" evidence="36">
    <location>
        <begin position="569"/>
        <end position="571"/>
    </location>
</feature>
<feature type="helix" evidence="36">
    <location>
        <begin position="572"/>
        <end position="584"/>
    </location>
</feature>
<feature type="strand" evidence="31">
    <location>
        <begin position="587"/>
        <end position="589"/>
    </location>
</feature>
<feature type="strand" evidence="36">
    <location>
        <begin position="598"/>
        <end position="601"/>
    </location>
</feature>
<feature type="turn" evidence="36">
    <location>
        <begin position="602"/>
        <end position="604"/>
    </location>
</feature>
<feature type="strand" evidence="36">
    <location>
        <begin position="605"/>
        <end position="609"/>
    </location>
</feature>
<feature type="helix" evidence="36">
    <location>
        <begin position="612"/>
        <end position="629"/>
    </location>
</feature>
<gene>
    <name type="primary">shc</name>
    <name type="ordered locus">Aaci_2443</name>
</gene>
<reference key="1">
    <citation type="journal article" date="1992" name="J. Bacteriol.">
        <title>Cloning, expression, and sequencing of squalene-hopene cyclase, a key enzyme in triterpenoid metabolism.</title>
        <authorList>
            <person name="Ochs D."/>
            <person name="Kaletta C."/>
            <person name="Entian K.-D."/>
            <person name="Beck-Sickinger A."/>
            <person name="Poralla K."/>
        </authorList>
    </citation>
    <scope>NUCLEOTIDE SEQUENCE [GENOMIC DNA]</scope>
    <source>
        <strain>ATCC 27009 / DSM 446 / BCRC 14685 / JCM 5260 / KCTC 1825 / NBRC 15652 / NCIMB 11725 / NRRL B-14509 / 104-IA</strain>
    </source>
</reference>
<reference key="2">
    <citation type="submission" date="1995-09" db="EMBL/GenBank/DDBJ databases">
        <authorList>
            <person name="Ochs D."/>
            <person name="Kaletta C."/>
            <person name="Entian K.-D."/>
            <person name="Beck-Sickinger A."/>
            <person name="Poralla K."/>
        </authorList>
    </citation>
    <scope>SEQUENCE REVISION</scope>
</reference>
<reference key="3">
    <citation type="journal article" date="1998" name="Biosci. Biotechnol. Biochem.">
        <title>Overexpression of squalene-hopene cyclase by the pET vector in Escherichia coli and first identification of tryptophan and aspartic acid residues inside the QW motif as active sites.</title>
        <authorList>
            <person name="Sato T."/>
            <person name="Kanai Y."/>
            <person name="Hoshino T."/>
        </authorList>
    </citation>
    <scope>NUCLEOTIDE SEQUENCE [GENOMIC DNA]</scope>
</reference>
<reference key="4">
    <citation type="submission" date="2009-09" db="EMBL/GenBank/DDBJ databases">
        <title>The complete chromosome of Alicyclobacillus acidocaldarius subsp. acidocaldarius DSM 446.</title>
        <authorList>
            <consortium name="US DOE Joint Genome Institute (JGI-PGF)"/>
            <person name="Lucas S."/>
            <person name="Copeland A."/>
            <person name="Lapidus A."/>
            <person name="Glavina del Rio T."/>
            <person name="Dalin E."/>
            <person name="Tice H."/>
            <person name="Bruce D."/>
            <person name="Goodwin L."/>
            <person name="Pitluck S."/>
            <person name="Kyrpides N."/>
            <person name="Mavromatis K."/>
            <person name="Ivanova N."/>
            <person name="Ovchinnikova G."/>
            <person name="Chertkov O."/>
            <person name="Sims D."/>
            <person name="Brettin T."/>
            <person name="Detter J.C."/>
            <person name="Han C."/>
            <person name="Larimer F."/>
            <person name="Land M."/>
            <person name="Hauser L."/>
            <person name="Markowitz V."/>
            <person name="Cheng J.-F."/>
            <person name="Hugenholtz P."/>
            <person name="Woyke T."/>
            <person name="Wu D."/>
            <person name="Pukall R."/>
            <person name="Klenk H.-P."/>
            <person name="Eisen J.A."/>
        </authorList>
    </citation>
    <scope>NUCLEOTIDE SEQUENCE [LARGE SCALE GENOMIC DNA]</scope>
    <source>
        <strain>ATCC 27009 / DSM 446 / BCRC 14685 / JCM 5260 / KCTC 1825 / NBRC 15652 / NCIMB 11725 / NRRL B-14509 / 104-IA</strain>
    </source>
</reference>
<reference key="5">
    <citation type="journal article" date="1990" name="Eur. J. Biochem.">
        <title>Properties of purified squalene-hopene cyclase from Bacillus acidocaldarius.</title>
        <authorList>
            <person name="Ochs D."/>
            <person name="Tappe C.H."/>
            <person name="Gaertner P."/>
            <person name="Kellner R."/>
            <person name="Poralla K."/>
        </authorList>
    </citation>
    <scope>PROTEIN SEQUENCE OF 2-25</scope>
    <scope>FUNCTION</scope>
    <scope>CATALYTIC ACTIVITY</scope>
    <scope>SUBCELLULAR LOCATION</scope>
    <scope>SUBUNIT</scope>
    <scope>BIOPHYSICOCHEMICAL PROPERTIES</scope>
    <source>
        <strain>ATCC 27009 / DSM 446 / BCRC 14685 / JCM 5260 / KCTC 1825 / NBRC 15652 / NCIMB 11725 / NRRL B-14509 / 104-IA</strain>
    </source>
</reference>
<reference key="6">
    <citation type="journal article" date="1986" name="Biochim. Biophys. Acta">
        <title>Characterization and partial purification of squalene-hopene cyclase from Bacillus acidocaldarius.</title>
        <authorList>
            <person name="Seckler B."/>
            <person name="Poralla K."/>
        </authorList>
    </citation>
    <scope>FUNCTION</scope>
    <scope>CATALYTIC ACTIVITY</scope>
    <scope>SUBCELLULAR LOCATION</scope>
    <scope>BIOPHYSICOCHEMICAL PROPERTIES</scope>
    <source>
        <strain>ATCC 27009 / DSM 446 / BCRC 14685 / JCM 5260 / KCTC 1825 / NBRC 15652 / NCIMB 11725 / NRRL B-14509 / 104-IA</strain>
    </source>
</reference>
<reference evidence="26" key="7">
    <citation type="journal article" date="1997" name="Science">
        <title>Structure and function of a squalene cyclase.</title>
        <authorList>
            <person name="Wendt K.U."/>
            <person name="Poralla K."/>
            <person name="Schulz G.E."/>
        </authorList>
    </citation>
    <scope>X-RAY CRYSTALLOGRAPHY (2.9 ANGSTROMS)</scope>
</reference>
<reference evidence="28 29" key="8">
    <citation type="journal article" date="1999" name="J. Mol. Biol.">
        <title>The structure of the membrane protein squalene-hopene cyclase at 2.0-A resolution.</title>
        <authorList>
            <person name="Wendt K.U."/>
            <person name="Lenhart A."/>
            <person name="Schulz G.E."/>
        </authorList>
    </citation>
    <scope>X-RAY CRYSTALLOGRAPHY (2.0 ANGSTROMS)</scope>
    <scope>REACTION MECHANISM</scope>
    <scope>ACTIVE SITE</scope>
</reference>
<reference evidence="14" key="9">
    <citation type="journal article" date="2002" name="Chem. Biol.">
        <title>Crystal structure of a squalene cyclase in complex with the potential anticholesteremic drug Ro48-8071.</title>
        <authorList>
            <person name="Lenhart A."/>
            <person name="Weihofen W.A."/>
            <person name="Pleschke A.E."/>
            <person name="Schulz G.E."/>
        </authorList>
    </citation>
    <scope>X-RAY CRYSTALLOGRAPHY (2.80 ANGSTROMS) IN COMPLEX WITH A EUKARYOTIC OXIDOSQUALENE CYCLASE INHIBITOR</scope>
    <scope>CATALYTIC ACTIVITY</scope>
    <scope>BIOPHYSICOCHEMICAL PROPERTIES</scope>
</reference>
<reference evidence="15 16 17 18 19 20 21 22 23 24 25" key="10">
    <citation type="journal article" date="2003" name="J. Med. Chem.">
        <title>Binding structures and potencies of oxidosqualene cyclase inhibitors with the homologous squalene-hopene cyclase.</title>
        <authorList>
            <person name="Lenhart A."/>
            <person name="Reinert D.J."/>
            <person name="Aebi J.D."/>
            <person name="Dehmlow H."/>
            <person name="Morand O.H."/>
            <person name="Schulz G.E."/>
        </authorList>
    </citation>
    <scope>X-RAY CRYSTALLOGRAPHY (2.70 ANGSTROMS) IN COMPLEXES WITH 11 HUMAN OXIDOSQUALENE CYCLASE INHIBITORS</scope>
    <scope>REACTION MECHANISM</scope>
    <scope>ACTIVE SITE</scope>
</reference>
<reference evidence="27" key="11">
    <citation type="journal article" date="2004" name="Chem. Biol.">
        <title>Conversion of squalene to the pentacarbocyclic hopene.</title>
        <authorList>
            <person name="Reinert D.J."/>
            <person name="Balliano G."/>
            <person name="Schulz G.E."/>
        </authorList>
    </citation>
    <scope>X-RAY CRYSTALLOGRAPHY (2.13 ANGSTROMS) IN COMPLEX WITH THE SUBSTRATE ANALOG 2-AZASQUALENE</scope>
</reference>
<protein>
    <recommendedName>
        <fullName evidence="5 6 7 8">Squalene--hopene cyclase</fullName>
        <shortName evidence="7">SHC</shortName>
        <ecNumber evidence="3 4">5.4.99.17</ecNumber>
    </recommendedName>
    <alternativeName>
        <fullName evidence="13">Squalene--hopanol cyclase</fullName>
        <ecNumber evidence="4">4.2.1.129</ecNumber>
    </alternativeName>
</protein>